<dbReference type="EC" id="5.4.2.12" evidence="1"/>
<dbReference type="EMBL" id="CP000937">
    <property type="protein sequence ID" value="ABZ86393.1"/>
    <property type="molecule type" value="Genomic_DNA"/>
</dbReference>
<dbReference type="SMR" id="B0TYM8"/>
<dbReference type="KEGG" id="fph:Fphi_0172"/>
<dbReference type="eggNOG" id="COG0696">
    <property type="taxonomic scope" value="Bacteria"/>
</dbReference>
<dbReference type="HOGENOM" id="CLU_026099_2_0_6"/>
<dbReference type="UniPathway" id="UPA00109">
    <property type="reaction ID" value="UER00186"/>
</dbReference>
<dbReference type="GO" id="GO:0005829">
    <property type="term" value="C:cytosol"/>
    <property type="evidence" value="ECO:0007669"/>
    <property type="project" value="TreeGrafter"/>
</dbReference>
<dbReference type="GO" id="GO:0030145">
    <property type="term" value="F:manganese ion binding"/>
    <property type="evidence" value="ECO:0007669"/>
    <property type="project" value="UniProtKB-UniRule"/>
</dbReference>
<dbReference type="GO" id="GO:0004619">
    <property type="term" value="F:phosphoglycerate mutase activity"/>
    <property type="evidence" value="ECO:0007669"/>
    <property type="project" value="UniProtKB-EC"/>
</dbReference>
<dbReference type="GO" id="GO:0006007">
    <property type="term" value="P:glucose catabolic process"/>
    <property type="evidence" value="ECO:0007669"/>
    <property type="project" value="InterPro"/>
</dbReference>
<dbReference type="GO" id="GO:0006096">
    <property type="term" value="P:glycolytic process"/>
    <property type="evidence" value="ECO:0007669"/>
    <property type="project" value="UniProtKB-UniRule"/>
</dbReference>
<dbReference type="CDD" id="cd16010">
    <property type="entry name" value="iPGM"/>
    <property type="match status" value="1"/>
</dbReference>
<dbReference type="FunFam" id="3.40.1450.10:FF:000001">
    <property type="entry name" value="2,3-bisphosphoglycerate-independent phosphoglycerate mutase"/>
    <property type="match status" value="1"/>
</dbReference>
<dbReference type="FunFam" id="3.40.720.10:FF:000001">
    <property type="entry name" value="2,3-bisphosphoglycerate-independent phosphoglycerate mutase"/>
    <property type="match status" value="1"/>
</dbReference>
<dbReference type="Gene3D" id="3.40.720.10">
    <property type="entry name" value="Alkaline Phosphatase, subunit A"/>
    <property type="match status" value="1"/>
</dbReference>
<dbReference type="Gene3D" id="3.40.1450.10">
    <property type="entry name" value="BPG-independent phosphoglycerate mutase, domain B"/>
    <property type="match status" value="1"/>
</dbReference>
<dbReference type="HAMAP" id="MF_01038">
    <property type="entry name" value="GpmI"/>
    <property type="match status" value="1"/>
</dbReference>
<dbReference type="InterPro" id="IPR017850">
    <property type="entry name" value="Alkaline_phosphatase_core_sf"/>
</dbReference>
<dbReference type="InterPro" id="IPR011258">
    <property type="entry name" value="BPG-indep_PGM_N"/>
</dbReference>
<dbReference type="InterPro" id="IPR006124">
    <property type="entry name" value="Metalloenzyme"/>
</dbReference>
<dbReference type="InterPro" id="IPR036646">
    <property type="entry name" value="PGAM_B_sf"/>
</dbReference>
<dbReference type="InterPro" id="IPR005995">
    <property type="entry name" value="Pgm_bpd_ind"/>
</dbReference>
<dbReference type="NCBIfam" id="TIGR01307">
    <property type="entry name" value="pgm_bpd_ind"/>
    <property type="match status" value="1"/>
</dbReference>
<dbReference type="PANTHER" id="PTHR31637">
    <property type="entry name" value="2,3-BISPHOSPHOGLYCERATE-INDEPENDENT PHOSPHOGLYCERATE MUTASE"/>
    <property type="match status" value="1"/>
</dbReference>
<dbReference type="PANTHER" id="PTHR31637:SF0">
    <property type="entry name" value="2,3-BISPHOSPHOGLYCERATE-INDEPENDENT PHOSPHOGLYCERATE MUTASE"/>
    <property type="match status" value="1"/>
</dbReference>
<dbReference type="Pfam" id="PF06415">
    <property type="entry name" value="iPGM_N"/>
    <property type="match status" value="1"/>
</dbReference>
<dbReference type="Pfam" id="PF01676">
    <property type="entry name" value="Metalloenzyme"/>
    <property type="match status" value="1"/>
</dbReference>
<dbReference type="PIRSF" id="PIRSF001492">
    <property type="entry name" value="IPGAM"/>
    <property type="match status" value="1"/>
</dbReference>
<dbReference type="SUPFAM" id="SSF64158">
    <property type="entry name" value="2,3-Bisphosphoglycerate-independent phosphoglycerate mutase, substrate-binding domain"/>
    <property type="match status" value="1"/>
</dbReference>
<dbReference type="SUPFAM" id="SSF53649">
    <property type="entry name" value="Alkaline phosphatase-like"/>
    <property type="match status" value="1"/>
</dbReference>
<organism>
    <name type="scientific">Francisella philomiragia subsp. philomiragia (strain ATCC 25017 / CCUG 19701 / FSC 153 / O#319-036)</name>
    <dbReference type="NCBI Taxonomy" id="484022"/>
    <lineage>
        <taxon>Bacteria</taxon>
        <taxon>Pseudomonadati</taxon>
        <taxon>Pseudomonadota</taxon>
        <taxon>Gammaproteobacteria</taxon>
        <taxon>Thiotrichales</taxon>
        <taxon>Francisellaceae</taxon>
        <taxon>Francisella</taxon>
    </lineage>
</organism>
<sequence>MKKTTLLVILDGWGYSESDYFNAIKNANTPTWDSIWQDFPRTLISASSLEVGLPRGQMGNSEVGHVNIGCGRVVYQELTKIDKAIEEKTFGNNKAICDAIDNVIQKDSNLHLMGLLSPGGVHSHEEHIFEMIKIAKQKGVKRVYLHAFLDGRDTPPRSAESSIKKTDDLLQKLNLGYIASVSGRYYAMDRDNRWDRVEKAYNAIVNADAEFVCNSALEALEESYARDQSDEFVIPTCIQKDGKLIKVEDNDSVIFMNFRADRAREISHAFTDENFDHFPKDRHLNINFTTLTEYDSKLKCNVAFPPEQPVNTLGEVLMKNHKTQLRIAETEKYPHVTFFFNGGKEDQFEGEDRILIPSPKVATYDLQPEMSAPEVTDKLVDAINNGKYDCIVCNYANSDMVGHTGNYEAAMQAIEYLDKCLARLKDAILEHDGNMFITADHGNADMMVNPKTQKPHTAHTTNLVPFVYVGHKKAQVALEHGKLSDIAPTILNVMNIAQPQEMTGKTIFKFEK</sequence>
<name>GPMI_FRAP2</name>
<reference key="1">
    <citation type="submission" date="2007-12" db="EMBL/GenBank/DDBJ databases">
        <title>Complete sequence of chromosome of Francisella philomiragia subsp. philomiragia ATCC 25017.</title>
        <authorList>
            <consortium name="US DOE Joint Genome Institute"/>
            <person name="Copeland A."/>
            <person name="Lucas S."/>
            <person name="Lapidus A."/>
            <person name="Barry K."/>
            <person name="Detter J.C."/>
            <person name="Glavina del Rio T."/>
            <person name="Hammon N."/>
            <person name="Israni S."/>
            <person name="Dalin E."/>
            <person name="Tice H."/>
            <person name="Pitluck S."/>
            <person name="Chain P."/>
            <person name="Malfatti S."/>
            <person name="Shin M."/>
            <person name="Vergez L."/>
            <person name="Schmutz J."/>
            <person name="Larimer F."/>
            <person name="Land M."/>
            <person name="Hauser L."/>
            <person name="Richardson P."/>
        </authorList>
    </citation>
    <scope>NUCLEOTIDE SEQUENCE [LARGE SCALE GENOMIC DNA]</scope>
    <source>
        <strain>ATCC 25017 / CCUG 19701 / FSC 153 / O#319-036</strain>
    </source>
</reference>
<gene>
    <name evidence="1" type="primary">gpmI</name>
    <name type="ordered locus">Fphi_0172</name>
</gene>
<proteinExistence type="inferred from homology"/>
<comment type="function">
    <text evidence="1">Catalyzes the interconversion of 2-phosphoglycerate and 3-phosphoglycerate.</text>
</comment>
<comment type="catalytic activity">
    <reaction evidence="1">
        <text>(2R)-2-phosphoglycerate = (2R)-3-phosphoglycerate</text>
        <dbReference type="Rhea" id="RHEA:15901"/>
        <dbReference type="ChEBI" id="CHEBI:58272"/>
        <dbReference type="ChEBI" id="CHEBI:58289"/>
        <dbReference type="EC" id="5.4.2.12"/>
    </reaction>
</comment>
<comment type="cofactor">
    <cofactor evidence="1">
        <name>Mn(2+)</name>
        <dbReference type="ChEBI" id="CHEBI:29035"/>
    </cofactor>
    <text evidence="1">Binds 2 manganese ions per subunit.</text>
</comment>
<comment type="pathway">
    <text evidence="1">Carbohydrate degradation; glycolysis; pyruvate from D-glyceraldehyde 3-phosphate: step 3/5.</text>
</comment>
<comment type="subunit">
    <text evidence="1">Monomer.</text>
</comment>
<comment type="similarity">
    <text evidence="1">Belongs to the BPG-independent phosphoglycerate mutase family.</text>
</comment>
<protein>
    <recommendedName>
        <fullName evidence="1">2,3-bisphosphoglycerate-independent phosphoglycerate mutase</fullName>
        <shortName evidence="1">BPG-independent PGAM</shortName>
        <shortName evidence="1">Phosphoglyceromutase</shortName>
        <shortName evidence="1">iPGM</shortName>
        <ecNumber evidence="1">5.4.2.12</ecNumber>
    </recommendedName>
</protein>
<keyword id="KW-0324">Glycolysis</keyword>
<keyword id="KW-0413">Isomerase</keyword>
<keyword id="KW-0464">Manganese</keyword>
<keyword id="KW-0479">Metal-binding</keyword>
<accession>B0TYM8</accession>
<evidence type="ECO:0000255" key="1">
    <source>
        <dbReference type="HAMAP-Rule" id="MF_01038"/>
    </source>
</evidence>
<feature type="chain" id="PRO_1000084306" description="2,3-bisphosphoglycerate-independent phosphoglycerate mutase">
    <location>
        <begin position="1"/>
        <end position="512"/>
    </location>
</feature>
<feature type="active site" description="Phosphoserine intermediate" evidence="1">
    <location>
        <position position="61"/>
    </location>
</feature>
<feature type="binding site" evidence="1">
    <location>
        <position position="11"/>
    </location>
    <ligand>
        <name>Mn(2+)</name>
        <dbReference type="ChEBI" id="CHEBI:29035"/>
        <label>2</label>
    </ligand>
</feature>
<feature type="binding site" evidence="1">
    <location>
        <position position="61"/>
    </location>
    <ligand>
        <name>Mn(2+)</name>
        <dbReference type="ChEBI" id="CHEBI:29035"/>
        <label>2</label>
    </ligand>
</feature>
<feature type="binding site" evidence="1">
    <location>
        <position position="122"/>
    </location>
    <ligand>
        <name>substrate</name>
    </ligand>
</feature>
<feature type="binding site" evidence="1">
    <location>
        <begin position="152"/>
        <end position="153"/>
    </location>
    <ligand>
        <name>substrate</name>
    </ligand>
</feature>
<feature type="binding site" evidence="1">
    <location>
        <position position="184"/>
    </location>
    <ligand>
        <name>substrate</name>
    </ligand>
</feature>
<feature type="binding site" evidence="1">
    <location>
        <position position="190"/>
    </location>
    <ligand>
        <name>substrate</name>
    </ligand>
</feature>
<feature type="binding site" evidence="1">
    <location>
        <begin position="259"/>
        <end position="262"/>
    </location>
    <ligand>
        <name>substrate</name>
    </ligand>
</feature>
<feature type="binding site" evidence="1">
    <location>
        <position position="332"/>
    </location>
    <ligand>
        <name>substrate</name>
    </ligand>
</feature>
<feature type="binding site" evidence="1">
    <location>
        <position position="399"/>
    </location>
    <ligand>
        <name>Mn(2+)</name>
        <dbReference type="ChEBI" id="CHEBI:29035"/>
        <label>1</label>
    </ligand>
</feature>
<feature type="binding site" evidence="1">
    <location>
        <position position="403"/>
    </location>
    <ligand>
        <name>Mn(2+)</name>
        <dbReference type="ChEBI" id="CHEBI:29035"/>
        <label>1</label>
    </ligand>
</feature>
<feature type="binding site" evidence="1">
    <location>
        <position position="440"/>
    </location>
    <ligand>
        <name>Mn(2+)</name>
        <dbReference type="ChEBI" id="CHEBI:29035"/>
        <label>2</label>
    </ligand>
</feature>
<feature type="binding site" evidence="1">
    <location>
        <position position="441"/>
    </location>
    <ligand>
        <name>Mn(2+)</name>
        <dbReference type="ChEBI" id="CHEBI:29035"/>
        <label>2</label>
    </ligand>
</feature>
<feature type="binding site" evidence="1">
    <location>
        <position position="459"/>
    </location>
    <ligand>
        <name>Mn(2+)</name>
        <dbReference type="ChEBI" id="CHEBI:29035"/>
        <label>1</label>
    </ligand>
</feature>